<sequence length="381" mass="42319">MIDTLRPVPFASEMAISKTVAWLNEQLELGNEQLLLMDCRPQELYESSHIESAINVAIPGIMLRRLQKGNLPVRALFTRCEDRDRFTRRCGTDTVVLYDENSSDWNENTGGESVLGLLLKKLKDEGCRAFYLEGGFSKFQAEFALHCETNLDGSCSSSSPPLPVLGLGGLRISSDSSSDIESDLDRDPNSATDSDGSPLSNSQPSFPVEILPFLYLGCAKDSTNLDVLEEFGIKYILNVTPNLPNLFENAGEFKYKQIPISDHWSQNLSQFFPEAISFIDEARGKNCGVLVHCLAGISRSVTVTVAYLMQKLNLSMNDAYDIVKMKKSNISPNFNFMGQLLDFERTLGLSSPCDNRVPAQQLYFTAPSNQNVYQVDSLQST</sequence>
<reference key="1">
    <citation type="journal article" date="1996" name="J. Biol. Chem.">
        <title>MKP-3, a novel cytosolic protein-tyrosine phosphatase that exemplifies a new class of mitogen-activated protein kinase phosphatase.</title>
        <authorList>
            <person name="Muda M."/>
            <person name="Boschert U."/>
            <person name="Dickinson R."/>
            <person name="Martinou J.-C."/>
            <person name="Martinou I."/>
            <person name="Camps M."/>
            <person name="Schlegel W."/>
            <person name="Arkinstall S."/>
        </authorList>
    </citation>
    <scope>NUCLEOTIDE SEQUENCE [MRNA]</scope>
    <scope>FUNCTION</scope>
    <scope>SUBCELLULAR LOCATION</scope>
    <scope>TISSUE SPECIFICITY</scope>
    <source>
        <strain>Sprague-Dawley</strain>
        <tissue>Neuron</tissue>
    </source>
</reference>
<reference key="2">
    <citation type="journal article" date="1996" name="J. Biol. Chem.">
        <title>A novel cytoplasmic dual specificity protein tyrosine phosphatase implicated in muscle and neuronal differentiation.</title>
        <authorList>
            <person name="Mourey R.J."/>
            <person name="Vega Q.C."/>
            <person name="Campbell J.S."/>
            <person name="Wenderoth M.P."/>
            <person name="Hauschka S.D."/>
            <person name="Krebs E.G."/>
            <person name="Dixon J.E."/>
        </authorList>
    </citation>
    <scope>NUCLEOTIDE SEQUENCE [MRNA]</scope>
    <scope>FUNCTION</scope>
</reference>
<reference key="3">
    <citation type="journal article" date="2004" name="Genome Res.">
        <title>The status, quality, and expansion of the NIH full-length cDNA project: the Mammalian Gene Collection (MGC).</title>
        <authorList>
            <consortium name="The MGC Project Team"/>
        </authorList>
    </citation>
    <scope>NUCLEOTIDE SEQUENCE [LARGE SCALE MRNA]</scope>
    <source>
        <tissue>Lung</tissue>
    </source>
</reference>
<gene>
    <name type="primary">Dusp6</name>
    <name type="synonym">Mkp3</name>
</gene>
<organism>
    <name type="scientific">Rattus norvegicus</name>
    <name type="common">Rat</name>
    <dbReference type="NCBI Taxonomy" id="10116"/>
    <lineage>
        <taxon>Eukaryota</taxon>
        <taxon>Metazoa</taxon>
        <taxon>Chordata</taxon>
        <taxon>Craniata</taxon>
        <taxon>Vertebrata</taxon>
        <taxon>Euteleostomi</taxon>
        <taxon>Mammalia</taxon>
        <taxon>Eutheria</taxon>
        <taxon>Euarchontoglires</taxon>
        <taxon>Glires</taxon>
        <taxon>Rodentia</taxon>
        <taxon>Myomorpha</taxon>
        <taxon>Muroidea</taxon>
        <taxon>Muridae</taxon>
        <taxon>Murinae</taxon>
        <taxon>Rattus</taxon>
    </lineage>
</organism>
<proteinExistence type="evidence at protein level"/>
<comment type="function">
    <text evidence="2 6 7">Dual specificity protein phosphatase, which mediates dephosphorylation and inactivation of MAP kinases (PubMed:8626780). Has a specificity for the ERK family (PubMed:8626780). Implicated in muscle and neuronal differentiation (PubMed:8631996). Plays an important role in alleviating chronic postoperative pain. Necessary for the normal dephosphorylation of the long-lasting phosphorylated forms of spinal MAPK1/3 and MAP kinase p38 induced by peripheral surgery, which drives the resolution of acute postoperative allodynia (By similarity). Also important for dephosphorylation of MAPK1/3 in local wound tissue, which further contributes to resolution of acute pain (By similarity).</text>
</comment>
<comment type="catalytic activity">
    <reaction>
        <text>O-phospho-L-tyrosyl-[protein] + H2O = L-tyrosyl-[protein] + phosphate</text>
        <dbReference type="Rhea" id="RHEA:10684"/>
        <dbReference type="Rhea" id="RHEA-COMP:10136"/>
        <dbReference type="Rhea" id="RHEA-COMP:20101"/>
        <dbReference type="ChEBI" id="CHEBI:15377"/>
        <dbReference type="ChEBI" id="CHEBI:43474"/>
        <dbReference type="ChEBI" id="CHEBI:46858"/>
        <dbReference type="ChEBI" id="CHEBI:61978"/>
        <dbReference type="EC" id="3.1.3.48"/>
    </reaction>
</comment>
<comment type="catalytic activity">
    <reaction>
        <text>O-phospho-L-seryl-[protein] + H2O = L-seryl-[protein] + phosphate</text>
        <dbReference type="Rhea" id="RHEA:20629"/>
        <dbReference type="Rhea" id="RHEA-COMP:9863"/>
        <dbReference type="Rhea" id="RHEA-COMP:11604"/>
        <dbReference type="ChEBI" id="CHEBI:15377"/>
        <dbReference type="ChEBI" id="CHEBI:29999"/>
        <dbReference type="ChEBI" id="CHEBI:43474"/>
        <dbReference type="ChEBI" id="CHEBI:83421"/>
        <dbReference type="EC" id="3.1.3.16"/>
    </reaction>
</comment>
<comment type="catalytic activity">
    <reaction>
        <text>O-phospho-L-threonyl-[protein] + H2O = L-threonyl-[protein] + phosphate</text>
        <dbReference type="Rhea" id="RHEA:47004"/>
        <dbReference type="Rhea" id="RHEA-COMP:11060"/>
        <dbReference type="Rhea" id="RHEA-COMP:11605"/>
        <dbReference type="ChEBI" id="CHEBI:15377"/>
        <dbReference type="ChEBI" id="CHEBI:30013"/>
        <dbReference type="ChEBI" id="CHEBI:43474"/>
        <dbReference type="ChEBI" id="CHEBI:61977"/>
        <dbReference type="EC" id="3.1.3.16"/>
    </reaction>
</comment>
<comment type="subunit">
    <text evidence="1">Interacts with MAPK1/ERK2.</text>
</comment>
<comment type="subcellular location">
    <subcellularLocation>
        <location evidence="6">Cytoplasm</location>
    </subcellularLocation>
</comment>
<comment type="tissue specificity">
    <text evidence="6">Expressed in lung, heart, brain, and kidney, but not significantly in skeletal muscle or testis.</text>
</comment>
<comment type="PTM">
    <text evidence="1">Ubiquitinated by the SCF(FBXO31) complex, leading to its proteasomal degradation.</text>
</comment>
<comment type="similarity">
    <text evidence="8">Belongs to the protein-tyrosine phosphatase family. Non-receptor class dual specificity subfamily.</text>
</comment>
<dbReference type="EC" id="3.1.3.16"/>
<dbReference type="EC" id="3.1.3.48"/>
<dbReference type="EMBL" id="X94185">
    <property type="protein sequence ID" value="CAA63895.1"/>
    <property type="molecule type" value="mRNA"/>
</dbReference>
<dbReference type="EMBL" id="U42627">
    <property type="protein sequence ID" value="AAB06202.1"/>
    <property type="molecule type" value="mRNA"/>
</dbReference>
<dbReference type="EMBL" id="BC087003">
    <property type="protein sequence ID" value="AAH87003.1"/>
    <property type="molecule type" value="mRNA"/>
</dbReference>
<dbReference type="RefSeq" id="NP_446335.1">
    <property type="nucleotide sequence ID" value="NM_053883.3"/>
</dbReference>
<dbReference type="PDB" id="2FYS">
    <property type="method" value="X-ray"/>
    <property type="resolution" value="2.50 A"/>
    <property type="chains" value="C/D=60-76"/>
</dbReference>
<dbReference type="PDBsum" id="2FYS"/>
<dbReference type="SMR" id="Q64346"/>
<dbReference type="DIP" id="DIP-61143N"/>
<dbReference type="FunCoup" id="Q64346">
    <property type="interactions" value="1214"/>
</dbReference>
<dbReference type="IntAct" id="Q64346">
    <property type="interactions" value="1"/>
</dbReference>
<dbReference type="STRING" id="10116.ENSRNOP00000032969"/>
<dbReference type="BindingDB" id="Q64346"/>
<dbReference type="ChEMBL" id="CHEMBL5511"/>
<dbReference type="DrugCentral" id="Q64346"/>
<dbReference type="iPTMnet" id="Q64346"/>
<dbReference type="PhosphoSitePlus" id="Q64346"/>
<dbReference type="PaxDb" id="10116-ENSRNOP00000032969"/>
<dbReference type="Ensembl" id="ENSRNOT00000111909.1">
    <property type="protein sequence ID" value="ENSRNOP00000087245.1"/>
    <property type="gene ID" value="ENSRNOG00000023896.5"/>
</dbReference>
<dbReference type="GeneID" id="116663"/>
<dbReference type="KEGG" id="rno:116663"/>
<dbReference type="UCSC" id="RGD:70978">
    <property type="organism name" value="rat"/>
</dbReference>
<dbReference type="AGR" id="RGD:70978"/>
<dbReference type="CTD" id="1848"/>
<dbReference type="RGD" id="70978">
    <property type="gene designation" value="Dusp6"/>
</dbReference>
<dbReference type="eggNOG" id="KOG1717">
    <property type="taxonomic scope" value="Eukaryota"/>
</dbReference>
<dbReference type="GeneTree" id="ENSGT00940000158342"/>
<dbReference type="HOGENOM" id="CLU_027074_0_0_1"/>
<dbReference type="InParanoid" id="Q64346"/>
<dbReference type="OMA" id="GNDQRCI"/>
<dbReference type="OrthoDB" id="165342at2759"/>
<dbReference type="PhylomeDB" id="Q64346"/>
<dbReference type="TreeFam" id="TF105122"/>
<dbReference type="Reactome" id="R-RNO-112409">
    <property type="pathway name" value="RAF-independent MAPK1/3 activation"/>
</dbReference>
<dbReference type="Reactome" id="R-RNO-202670">
    <property type="pathway name" value="ERKs are inactivated"/>
</dbReference>
<dbReference type="Reactome" id="R-RNO-5675221">
    <property type="pathway name" value="Negative regulation of MAPK pathway"/>
</dbReference>
<dbReference type="EvolutionaryTrace" id="Q64346"/>
<dbReference type="PRO" id="PR:Q64346"/>
<dbReference type="Proteomes" id="UP000002494">
    <property type="component" value="Chromosome 7"/>
</dbReference>
<dbReference type="Bgee" id="ENSRNOG00000023896">
    <property type="expression patterns" value="Expressed in lung and 20 other cell types or tissues"/>
</dbReference>
<dbReference type="GO" id="GO:0005737">
    <property type="term" value="C:cytoplasm"/>
    <property type="evidence" value="ECO:0000266"/>
    <property type="project" value="RGD"/>
</dbReference>
<dbReference type="GO" id="GO:0005829">
    <property type="term" value="C:cytosol"/>
    <property type="evidence" value="ECO:0000318"/>
    <property type="project" value="GO_Central"/>
</dbReference>
<dbReference type="GO" id="GO:0005654">
    <property type="term" value="C:nucleoplasm"/>
    <property type="evidence" value="ECO:0007669"/>
    <property type="project" value="Ensembl"/>
</dbReference>
<dbReference type="GO" id="GO:0033550">
    <property type="term" value="F:MAP kinase tyrosine phosphatase activity"/>
    <property type="evidence" value="ECO:0000318"/>
    <property type="project" value="GO_Central"/>
</dbReference>
<dbReference type="GO" id="GO:0017017">
    <property type="term" value="F:MAP kinase tyrosine/serine/threonine phosphatase activity"/>
    <property type="evidence" value="ECO:0000266"/>
    <property type="project" value="RGD"/>
</dbReference>
<dbReference type="GO" id="GO:0004721">
    <property type="term" value="F:phosphoprotein phosphatase activity"/>
    <property type="evidence" value="ECO:0000266"/>
    <property type="project" value="RGD"/>
</dbReference>
<dbReference type="GO" id="GO:0004722">
    <property type="term" value="F:protein serine/threonine phosphatase activity"/>
    <property type="evidence" value="ECO:0007669"/>
    <property type="project" value="UniProtKB-EC"/>
</dbReference>
<dbReference type="GO" id="GO:0008138">
    <property type="term" value="F:protein tyrosine/serine/threonine phosphatase activity"/>
    <property type="evidence" value="ECO:0000314"/>
    <property type="project" value="RGD"/>
</dbReference>
<dbReference type="GO" id="GO:0008330">
    <property type="term" value="F:protein tyrosine/threonine phosphatase activity"/>
    <property type="evidence" value="ECO:0000318"/>
    <property type="project" value="GO_Central"/>
</dbReference>
<dbReference type="GO" id="GO:0030154">
    <property type="term" value="P:cell differentiation"/>
    <property type="evidence" value="ECO:0000270"/>
    <property type="project" value="RGD"/>
</dbReference>
<dbReference type="GO" id="GO:0070373">
    <property type="term" value="P:negative regulation of ERK1 and ERK2 cascade"/>
    <property type="evidence" value="ECO:0000314"/>
    <property type="project" value="RGD"/>
</dbReference>
<dbReference type="GO" id="GO:0043409">
    <property type="term" value="P:negative regulation of MAPK cascade"/>
    <property type="evidence" value="ECO:0000266"/>
    <property type="project" value="RGD"/>
</dbReference>
<dbReference type="GO" id="GO:0043065">
    <property type="term" value="P:positive regulation of apoptotic process"/>
    <property type="evidence" value="ECO:0000266"/>
    <property type="project" value="RGD"/>
</dbReference>
<dbReference type="GO" id="GO:0060420">
    <property type="term" value="P:regulation of heart growth"/>
    <property type="evidence" value="ECO:0000266"/>
    <property type="project" value="RGD"/>
</dbReference>
<dbReference type="GO" id="GO:0070848">
    <property type="term" value="P:response to growth factor"/>
    <property type="evidence" value="ECO:0000270"/>
    <property type="project" value="RGD"/>
</dbReference>
<dbReference type="GO" id="GO:0051409">
    <property type="term" value="P:response to nitrosative stress"/>
    <property type="evidence" value="ECO:0000266"/>
    <property type="project" value="RGD"/>
</dbReference>
<dbReference type="GO" id="GO:0009410">
    <property type="term" value="P:response to xenobiotic stimulus"/>
    <property type="evidence" value="ECO:0000270"/>
    <property type="project" value="RGD"/>
</dbReference>
<dbReference type="GO" id="GO:0007165">
    <property type="term" value="P:signal transduction"/>
    <property type="evidence" value="ECO:0000318"/>
    <property type="project" value="GO_Central"/>
</dbReference>
<dbReference type="CDD" id="cd01446">
    <property type="entry name" value="DSP_MapKP"/>
    <property type="match status" value="1"/>
</dbReference>
<dbReference type="CDD" id="cd14566">
    <property type="entry name" value="DSP_MKP_classII"/>
    <property type="match status" value="1"/>
</dbReference>
<dbReference type="FunFam" id="3.90.190.10:FF:000011">
    <property type="entry name" value="Dual specificity phosphatase 6"/>
    <property type="match status" value="1"/>
</dbReference>
<dbReference type="FunFam" id="3.40.250.10:FF:000011">
    <property type="entry name" value="Dual specificity phosphatase 7"/>
    <property type="match status" value="1"/>
</dbReference>
<dbReference type="Gene3D" id="3.90.190.10">
    <property type="entry name" value="Protein tyrosine phosphatase superfamily"/>
    <property type="match status" value="1"/>
</dbReference>
<dbReference type="Gene3D" id="3.40.250.10">
    <property type="entry name" value="Rhodanese-like domain"/>
    <property type="match status" value="1"/>
</dbReference>
<dbReference type="IDEAL" id="IID50335"/>
<dbReference type="InterPro" id="IPR000340">
    <property type="entry name" value="Dual-sp_phosphatase_cat-dom"/>
</dbReference>
<dbReference type="InterPro" id="IPR008343">
    <property type="entry name" value="MKP"/>
</dbReference>
<dbReference type="InterPro" id="IPR029021">
    <property type="entry name" value="Prot-tyrosine_phosphatase-like"/>
</dbReference>
<dbReference type="InterPro" id="IPR001763">
    <property type="entry name" value="Rhodanese-like_dom"/>
</dbReference>
<dbReference type="InterPro" id="IPR036873">
    <property type="entry name" value="Rhodanese-like_dom_sf"/>
</dbReference>
<dbReference type="InterPro" id="IPR000387">
    <property type="entry name" value="Tyr_Pase_dom"/>
</dbReference>
<dbReference type="InterPro" id="IPR020422">
    <property type="entry name" value="TYR_PHOSPHATASE_DUAL_dom"/>
</dbReference>
<dbReference type="PANTHER" id="PTHR10159">
    <property type="entry name" value="DUAL SPECIFICITY PROTEIN PHOSPHATASE"/>
    <property type="match status" value="1"/>
</dbReference>
<dbReference type="PANTHER" id="PTHR10159:SF45">
    <property type="entry name" value="DUAL SPECIFICITY PROTEIN PHOSPHATASE 6"/>
    <property type="match status" value="1"/>
</dbReference>
<dbReference type="Pfam" id="PF00782">
    <property type="entry name" value="DSPc"/>
    <property type="match status" value="1"/>
</dbReference>
<dbReference type="Pfam" id="PF00581">
    <property type="entry name" value="Rhodanese"/>
    <property type="match status" value="1"/>
</dbReference>
<dbReference type="PIRSF" id="PIRSF000939">
    <property type="entry name" value="MAPK_Ptase"/>
    <property type="match status" value="1"/>
</dbReference>
<dbReference type="PRINTS" id="PR01764">
    <property type="entry name" value="MAPKPHPHTASE"/>
</dbReference>
<dbReference type="SMART" id="SM00195">
    <property type="entry name" value="DSPc"/>
    <property type="match status" value="1"/>
</dbReference>
<dbReference type="SMART" id="SM00450">
    <property type="entry name" value="RHOD"/>
    <property type="match status" value="1"/>
</dbReference>
<dbReference type="SUPFAM" id="SSF52799">
    <property type="entry name" value="(Phosphotyrosine protein) phosphatases II"/>
    <property type="match status" value="1"/>
</dbReference>
<dbReference type="SUPFAM" id="SSF52821">
    <property type="entry name" value="Rhodanese/Cell cycle control phosphatase"/>
    <property type="match status" value="1"/>
</dbReference>
<dbReference type="PROSITE" id="PS50206">
    <property type="entry name" value="RHODANESE_3"/>
    <property type="match status" value="1"/>
</dbReference>
<dbReference type="PROSITE" id="PS50056">
    <property type="entry name" value="TYR_PHOSPHATASE_2"/>
    <property type="match status" value="1"/>
</dbReference>
<dbReference type="PROSITE" id="PS50054">
    <property type="entry name" value="TYR_PHOSPHATASE_DUAL"/>
    <property type="match status" value="1"/>
</dbReference>
<evidence type="ECO:0000250" key="1">
    <source>
        <dbReference type="UniProtKB" id="Q16828"/>
    </source>
</evidence>
<evidence type="ECO:0000250" key="2">
    <source>
        <dbReference type="UniProtKB" id="Q9DBB1"/>
    </source>
</evidence>
<evidence type="ECO:0000255" key="3">
    <source>
        <dbReference type="PROSITE-ProRule" id="PRU00160"/>
    </source>
</evidence>
<evidence type="ECO:0000255" key="4">
    <source>
        <dbReference type="PROSITE-ProRule" id="PRU00173"/>
    </source>
</evidence>
<evidence type="ECO:0000256" key="5">
    <source>
        <dbReference type="SAM" id="MobiDB-lite"/>
    </source>
</evidence>
<evidence type="ECO:0000269" key="6">
    <source>
    </source>
</evidence>
<evidence type="ECO:0000269" key="7">
    <source>
    </source>
</evidence>
<evidence type="ECO:0000305" key="8"/>
<name>DUS6_RAT</name>
<keyword id="KW-0002">3D-structure</keyword>
<keyword id="KW-0963">Cytoplasm</keyword>
<keyword id="KW-0378">Hydrolase</keyword>
<keyword id="KW-0904">Protein phosphatase</keyword>
<keyword id="KW-1185">Reference proteome</keyword>
<keyword id="KW-0832">Ubl conjugation</keyword>
<protein>
    <recommendedName>
        <fullName>Dual specificity protein phosphatase 6</fullName>
        <ecNumber>3.1.3.16</ecNumber>
        <ecNumber>3.1.3.48</ecNumber>
    </recommendedName>
    <alternativeName>
        <fullName>Mitogen-activated protein kinase phosphatase 3</fullName>
        <shortName>MAP kinase phosphatase 3</shortName>
        <shortName>MKP-3</shortName>
    </alternativeName>
</protein>
<feature type="chain" id="PRO_0000094806" description="Dual specificity protein phosphatase 6">
    <location>
        <begin position="1"/>
        <end position="381"/>
    </location>
</feature>
<feature type="domain" description="Rhodanese" evidence="4">
    <location>
        <begin position="30"/>
        <end position="148"/>
    </location>
</feature>
<feature type="domain" description="Tyrosine-protein phosphatase" evidence="3">
    <location>
        <begin position="206"/>
        <end position="349"/>
    </location>
</feature>
<feature type="region of interest" description="Disordered" evidence="5">
    <location>
        <begin position="176"/>
        <end position="203"/>
    </location>
</feature>
<feature type="compositionally biased region" description="Polar residues" evidence="5">
    <location>
        <begin position="189"/>
        <end position="203"/>
    </location>
</feature>
<feature type="active site" description="Phosphocysteine intermediate" evidence="3">
    <location>
        <position position="293"/>
    </location>
</feature>
<accession>Q64346</accession>